<protein>
    <recommendedName>
        <fullName evidence="2">Phosphate import ATP-binding protein PstB</fullName>
        <ecNumber evidence="2">7.3.2.1</ecNumber>
    </recommendedName>
    <alternativeName>
        <fullName evidence="2">ABC phosphate transporter</fullName>
    </alternativeName>
    <alternativeName>
        <fullName evidence="2">Phosphate-transporting ATPase</fullName>
    </alternativeName>
</protein>
<dbReference type="EC" id="7.3.2.1" evidence="2"/>
<dbReference type="EMBL" id="CP000038">
    <property type="protein sequence ID" value="AAZ90445.1"/>
    <property type="molecule type" value="Genomic_DNA"/>
</dbReference>
<dbReference type="RefSeq" id="WP_000063125.1">
    <property type="nucleotide sequence ID" value="NC_007384.1"/>
</dbReference>
<dbReference type="SMR" id="Q3YVL7"/>
<dbReference type="GeneID" id="93778212"/>
<dbReference type="KEGG" id="ssn:SSON_3909"/>
<dbReference type="HOGENOM" id="CLU_000604_1_22_6"/>
<dbReference type="Proteomes" id="UP000002529">
    <property type="component" value="Chromosome"/>
</dbReference>
<dbReference type="GO" id="GO:0005886">
    <property type="term" value="C:plasma membrane"/>
    <property type="evidence" value="ECO:0007669"/>
    <property type="project" value="UniProtKB-SubCell"/>
</dbReference>
<dbReference type="GO" id="GO:0005524">
    <property type="term" value="F:ATP binding"/>
    <property type="evidence" value="ECO:0007669"/>
    <property type="project" value="UniProtKB-KW"/>
</dbReference>
<dbReference type="GO" id="GO:0016887">
    <property type="term" value="F:ATP hydrolysis activity"/>
    <property type="evidence" value="ECO:0007669"/>
    <property type="project" value="InterPro"/>
</dbReference>
<dbReference type="GO" id="GO:0015415">
    <property type="term" value="F:ATPase-coupled phosphate ion transmembrane transporter activity"/>
    <property type="evidence" value="ECO:0007669"/>
    <property type="project" value="UniProtKB-EC"/>
</dbReference>
<dbReference type="GO" id="GO:0035435">
    <property type="term" value="P:phosphate ion transmembrane transport"/>
    <property type="evidence" value="ECO:0007669"/>
    <property type="project" value="InterPro"/>
</dbReference>
<dbReference type="CDD" id="cd03260">
    <property type="entry name" value="ABC_PstB_phosphate_transporter"/>
    <property type="match status" value="1"/>
</dbReference>
<dbReference type="FunFam" id="3.40.50.300:FF:000132">
    <property type="entry name" value="Phosphate import ATP-binding protein PstB"/>
    <property type="match status" value="1"/>
</dbReference>
<dbReference type="Gene3D" id="3.40.50.300">
    <property type="entry name" value="P-loop containing nucleotide triphosphate hydrolases"/>
    <property type="match status" value="1"/>
</dbReference>
<dbReference type="InterPro" id="IPR003593">
    <property type="entry name" value="AAA+_ATPase"/>
</dbReference>
<dbReference type="InterPro" id="IPR003439">
    <property type="entry name" value="ABC_transporter-like_ATP-bd"/>
</dbReference>
<dbReference type="InterPro" id="IPR017871">
    <property type="entry name" value="ABC_transporter-like_CS"/>
</dbReference>
<dbReference type="InterPro" id="IPR027417">
    <property type="entry name" value="P-loop_NTPase"/>
</dbReference>
<dbReference type="InterPro" id="IPR005670">
    <property type="entry name" value="PstB-like"/>
</dbReference>
<dbReference type="NCBIfam" id="TIGR00972">
    <property type="entry name" value="3a0107s01c2"/>
    <property type="match status" value="1"/>
</dbReference>
<dbReference type="PANTHER" id="PTHR43423">
    <property type="entry name" value="ABC TRANSPORTER I FAMILY MEMBER 17"/>
    <property type="match status" value="1"/>
</dbReference>
<dbReference type="PANTHER" id="PTHR43423:SF3">
    <property type="entry name" value="PHOSPHATE IMPORT ATP-BINDING PROTEIN PSTB"/>
    <property type="match status" value="1"/>
</dbReference>
<dbReference type="Pfam" id="PF00005">
    <property type="entry name" value="ABC_tran"/>
    <property type="match status" value="1"/>
</dbReference>
<dbReference type="SMART" id="SM00382">
    <property type="entry name" value="AAA"/>
    <property type="match status" value="1"/>
</dbReference>
<dbReference type="SUPFAM" id="SSF52540">
    <property type="entry name" value="P-loop containing nucleoside triphosphate hydrolases"/>
    <property type="match status" value="1"/>
</dbReference>
<dbReference type="PROSITE" id="PS00211">
    <property type="entry name" value="ABC_TRANSPORTER_1"/>
    <property type="match status" value="1"/>
</dbReference>
<dbReference type="PROSITE" id="PS50893">
    <property type="entry name" value="ABC_TRANSPORTER_2"/>
    <property type="match status" value="1"/>
</dbReference>
<dbReference type="PROSITE" id="PS51238">
    <property type="entry name" value="PSTB"/>
    <property type="match status" value="1"/>
</dbReference>
<organism>
    <name type="scientific">Shigella sonnei (strain Ss046)</name>
    <dbReference type="NCBI Taxonomy" id="300269"/>
    <lineage>
        <taxon>Bacteria</taxon>
        <taxon>Pseudomonadati</taxon>
        <taxon>Pseudomonadota</taxon>
        <taxon>Gammaproteobacteria</taxon>
        <taxon>Enterobacterales</taxon>
        <taxon>Enterobacteriaceae</taxon>
        <taxon>Shigella</taxon>
    </lineage>
</organism>
<evidence type="ECO:0000250" key="1"/>
<evidence type="ECO:0000255" key="2">
    <source>
        <dbReference type="HAMAP-Rule" id="MF_01702"/>
    </source>
</evidence>
<name>PSTB_SHISS</name>
<gene>
    <name evidence="2" type="primary">pstB</name>
    <name type="ordered locus">SSON_3909</name>
</gene>
<comment type="function">
    <text evidence="2">Part of the ABC transporter complex PstSACB involved in phosphate import. Responsible for energy coupling to the transport system.</text>
</comment>
<comment type="catalytic activity">
    <reaction evidence="2">
        <text>phosphate(out) + ATP + H2O = ADP + 2 phosphate(in) + H(+)</text>
        <dbReference type="Rhea" id="RHEA:24440"/>
        <dbReference type="ChEBI" id="CHEBI:15377"/>
        <dbReference type="ChEBI" id="CHEBI:15378"/>
        <dbReference type="ChEBI" id="CHEBI:30616"/>
        <dbReference type="ChEBI" id="CHEBI:43474"/>
        <dbReference type="ChEBI" id="CHEBI:456216"/>
        <dbReference type="EC" id="7.3.2.1"/>
    </reaction>
</comment>
<comment type="subunit">
    <text evidence="2">The complex is composed of two ATP-binding proteins (PstB), two transmembrane proteins (PstC and PstA) and a solute-binding protein (PstS).</text>
</comment>
<comment type="subcellular location">
    <subcellularLocation>
        <location evidence="2">Cell inner membrane</location>
        <topology evidence="2">Peripheral membrane protein</topology>
    </subcellularLocation>
</comment>
<comment type="similarity">
    <text evidence="2">Belongs to the ABC transporter superfamily. Phosphate importer (TC 3.A.1.7) family.</text>
</comment>
<reference key="1">
    <citation type="journal article" date="2005" name="Nucleic Acids Res.">
        <title>Genome dynamics and diversity of Shigella species, the etiologic agents of bacillary dysentery.</title>
        <authorList>
            <person name="Yang F."/>
            <person name="Yang J."/>
            <person name="Zhang X."/>
            <person name="Chen L."/>
            <person name="Jiang Y."/>
            <person name="Yan Y."/>
            <person name="Tang X."/>
            <person name="Wang J."/>
            <person name="Xiong Z."/>
            <person name="Dong J."/>
            <person name="Xue Y."/>
            <person name="Zhu Y."/>
            <person name="Xu X."/>
            <person name="Sun L."/>
            <person name="Chen S."/>
            <person name="Nie H."/>
            <person name="Peng J."/>
            <person name="Xu J."/>
            <person name="Wang Y."/>
            <person name="Yuan Z."/>
            <person name="Wen Y."/>
            <person name="Yao Z."/>
            <person name="Shen Y."/>
            <person name="Qiang B."/>
            <person name="Hou Y."/>
            <person name="Yu J."/>
            <person name="Jin Q."/>
        </authorList>
    </citation>
    <scope>NUCLEOTIDE SEQUENCE [LARGE SCALE GENOMIC DNA]</scope>
    <source>
        <strain>Ss046</strain>
    </source>
</reference>
<proteinExistence type="inferred from homology"/>
<keyword id="KW-0067">ATP-binding</keyword>
<keyword id="KW-0997">Cell inner membrane</keyword>
<keyword id="KW-1003">Cell membrane</keyword>
<keyword id="KW-0472">Membrane</keyword>
<keyword id="KW-0547">Nucleotide-binding</keyword>
<keyword id="KW-0592">Phosphate transport</keyword>
<keyword id="KW-1185">Reference proteome</keyword>
<keyword id="KW-1278">Translocase</keyword>
<keyword id="KW-0813">Transport</keyword>
<sequence length="257" mass="29027">MSMVETAPSKIQVRNLNFYYGKFHALKNINLDIAKNQVTAFIGPSGCGKSTLLRTFNKMFELYPEQRAEGEILLDGDNILTNSQDIALLRAKVGMVFQKPTPFPMSIYDNIAFGVRLFEKLSRADMDERVQWALTKAALWNETKDKLHQSGYSLSGGQQQRLCIARGIAIRPEVLLLDEPCSALDPISTGRIEELITELKQDYTVVIVTHNMQQAARCSDHTAFMYLGELIEFSNTDDLFTKPAKKQTEDYITGRYG</sequence>
<accession>Q3YVL7</accession>
<feature type="initiator methionine" description="Removed" evidence="1">
    <location>
        <position position="1"/>
    </location>
</feature>
<feature type="chain" id="PRO_0000272529" description="Phosphate import ATP-binding protein PstB">
    <location>
        <begin position="2"/>
        <end position="257"/>
    </location>
</feature>
<feature type="domain" description="ABC transporter" evidence="2">
    <location>
        <begin position="11"/>
        <end position="252"/>
    </location>
</feature>
<feature type="binding site" evidence="2">
    <location>
        <begin position="43"/>
        <end position="50"/>
    </location>
    <ligand>
        <name>ATP</name>
        <dbReference type="ChEBI" id="CHEBI:30616"/>
    </ligand>
</feature>